<accession>A0A158V755</accession>
<proteinExistence type="evidence at transcript level"/>
<comment type="function">
    <text evidence="5">Plant non-specific lipid-transfer proteins transfer phospholipids as well as galactolipids across membranes. May play a role in wax or cutin deposition in the cell walls of expanding epidermal cells and certain secretory tissues.</text>
</comment>
<comment type="tissue specificity">
    <text evidence="3">Expressed in roots, stem, leaves and tendrils of the mature plant.</text>
</comment>
<comment type="developmental stage">
    <text evidence="3">Expression increases after germination and again in the mature plant.</text>
</comment>
<comment type="similarity">
    <text evidence="5">Belongs to the plant LTP family.</text>
</comment>
<feature type="signal peptide" evidence="2">
    <location>
        <begin position="1"/>
        <end position="25"/>
    </location>
</feature>
<feature type="chain" id="PRO_0000437171" description="Non-specific lipid-transfer protein 2" evidence="2">
    <location>
        <begin position="26"/>
        <end position="120"/>
    </location>
</feature>
<feature type="disulfide bond" evidence="1">
    <location>
        <begin position="29"/>
        <end position="78"/>
    </location>
</feature>
<feature type="disulfide bond" evidence="1">
    <location>
        <begin position="39"/>
        <end position="55"/>
    </location>
</feature>
<feature type="disulfide bond" evidence="1">
    <location>
        <begin position="56"/>
        <end position="101"/>
    </location>
</feature>
<feature type="disulfide bond" evidence="1">
    <location>
        <begin position="76"/>
        <end position="115"/>
    </location>
</feature>
<protein>
    <recommendedName>
        <fullName evidence="4">Non-specific lipid-transfer protein 2</fullName>
        <shortName evidence="4">PsLTP2</shortName>
    </recommendedName>
</protein>
<keyword id="KW-1015">Disulfide bond</keyword>
<keyword id="KW-0445">Lipid transport</keyword>
<keyword id="KW-0732">Signal</keyword>
<keyword id="KW-0813">Transport</keyword>
<dbReference type="EMBL" id="KJ569142">
    <property type="protein sequence ID" value="AJG44054.1"/>
    <property type="molecule type" value="mRNA"/>
</dbReference>
<dbReference type="RefSeq" id="NP_001413934.1">
    <property type="nucleotide sequence ID" value="NM_001427005.1"/>
</dbReference>
<dbReference type="SMR" id="A0A158V755"/>
<dbReference type="Allergome" id="11950">
    <property type="allergen name" value="Pis s 3"/>
</dbReference>
<dbReference type="GeneID" id="127101074"/>
<dbReference type="GO" id="GO:0008289">
    <property type="term" value="F:lipid binding"/>
    <property type="evidence" value="ECO:0007669"/>
    <property type="project" value="InterPro"/>
</dbReference>
<dbReference type="GO" id="GO:0006869">
    <property type="term" value="P:lipid transport"/>
    <property type="evidence" value="ECO:0007669"/>
    <property type="project" value="UniProtKB-KW"/>
</dbReference>
<dbReference type="CDD" id="cd01960">
    <property type="entry name" value="nsLTP1"/>
    <property type="match status" value="1"/>
</dbReference>
<dbReference type="FunFam" id="1.10.110.10:FF:000002">
    <property type="entry name" value="Non-specific lipid-transfer protein"/>
    <property type="match status" value="1"/>
</dbReference>
<dbReference type="Gene3D" id="1.10.110.10">
    <property type="entry name" value="Plant lipid-transfer and hydrophobic proteins"/>
    <property type="match status" value="1"/>
</dbReference>
<dbReference type="InterPro" id="IPR036312">
    <property type="entry name" value="Bifun_inhib/LTP/seed_sf"/>
</dbReference>
<dbReference type="InterPro" id="IPR016140">
    <property type="entry name" value="Bifunc_inhib/LTP/seed_store"/>
</dbReference>
<dbReference type="InterPro" id="IPR000528">
    <property type="entry name" value="Plant_nsLTP"/>
</dbReference>
<dbReference type="PANTHER" id="PTHR33076">
    <property type="entry name" value="NON-SPECIFIC LIPID-TRANSFER PROTEIN 2-RELATED"/>
    <property type="match status" value="1"/>
</dbReference>
<dbReference type="Pfam" id="PF00234">
    <property type="entry name" value="Tryp_alpha_amyl"/>
    <property type="match status" value="1"/>
</dbReference>
<dbReference type="PRINTS" id="PR00382">
    <property type="entry name" value="LIPIDTRNSFER"/>
</dbReference>
<dbReference type="SMART" id="SM00499">
    <property type="entry name" value="AAI"/>
    <property type="match status" value="1"/>
</dbReference>
<dbReference type="SUPFAM" id="SSF47699">
    <property type="entry name" value="Bifunctional inhibitor/lipid-transfer protein/seed storage 2S albumin"/>
    <property type="match status" value="1"/>
</dbReference>
<dbReference type="PROSITE" id="PS00597">
    <property type="entry name" value="PLANT_LTP"/>
    <property type="match status" value="1"/>
</dbReference>
<name>NLTP2_PEA</name>
<organism>
    <name type="scientific">Pisum sativum</name>
    <name type="common">Garden pea</name>
    <name type="synonym">Lathyrus oleraceus</name>
    <dbReference type="NCBI Taxonomy" id="3888"/>
    <lineage>
        <taxon>Eukaryota</taxon>
        <taxon>Viridiplantae</taxon>
        <taxon>Streptophyta</taxon>
        <taxon>Embryophyta</taxon>
        <taxon>Tracheophyta</taxon>
        <taxon>Spermatophyta</taxon>
        <taxon>Magnoliopsida</taxon>
        <taxon>eudicotyledons</taxon>
        <taxon>Gunneridae</taxon>
        <taxon>Pentapetalae</taxon>
        <taxon>rosids</taxon>
        <taxon>fabids</taxon>
        <taxon>Fabales</taxon>
        <taxon>Fabaceae</taxon>
        <taxon>Papilionoideae</taxon>
        <taxon>50 kb inversion clade</taxon>
        <taxon>NPAAA clade</taxon>
        <taxon>Hologalegina</taxon>
        <taxon>IRL clade</taxon>
        <taxon>Fabeae</taxon>
        <taxon>Pisum</taxon>
    </lineage>
</organism>
<reference evidence="5" key="1">
    <citation type="journal article" date="2016" name="BMC Plant Biol.">
        <title>A novel lipid transfer protein from the pea Pisum sativum: isolation, recombinant expression, solution structure, antifungal activity, lipid binding, and allergenic properties.</title>
        <authorList>
            <person name="Bogdanov I.V."/>
            <person name="Shenkarev Z.O."/>
            <person name="Finkina E.I."/>
            <person name="Melnikova D.N."/>
            <person name="Rumynskiy E.I."/>
            <person name="Arseniev A.S."/>
            <person name="Ovchinnikova T.V."/>
        </authorList>
    </citation>
    <scope>NUCLEOTIDE SEQUENCE [MRNA]</scope>
    <scope>TISSUE SPECIFICITY</scope>
    <scope>DEVELOPMENTAL STAGE</scope>
    <source>
        <tissue evidence="3">Seed</tissue>
    </source>
</reference>
<sequence length="120" mass="12095">MATSMKLACVALVMCMVVIAPMAEAALSCGTVSGDLAPCLTYLQAPNNASPPPPCCAGVKKLLGAATTTPDRQAACNCLKSAAGSISRLNTNNAAALPGKCGVSIPYKISTSTNCNTIKF</sequence>
<evidence type="ECO:0000250" key="1">
    <source>
        <dbReference type="UniProtKB" id="A0A161AT60"/>
    </source>
</evidence>
<evidence type="ECO:0000255" key="2"/>
<evidence type="ECO:0000269" key="3">
    <source>
    </source>
</evidence>
<evidence type="ECO:0000303" key="4">
    <source>
    </source>
</evidence>
<evidence type="ECO:0000305" key="5"/>